<dbReference type="EC" id="2.1.1.199" evidence="1"/>
<dbReference type="EMBL" id="CP001172">
    <property type="protein sequence ID" value="ACJ57750.1"/>
    <property type="molecule type" value="Genomic_DNA"/>
</dbReference>
<dbReference type="RefSeq" id="WP_000018346.1">
    <property type="nucleotide sequence ID" value="NZ_CP001172.1"/>
</dbReference>
<dbReference type="SMR" id="B7GVN1"/>
<dbReference type="GeneID" id="92895440"/>
<dbReference type="HOGENOM" id="CLU_038422_2_0_6"/>
<dbReference type="Proteomes" id="UP000006924">
    <property type="component" value="Chromosome"/>
</dbReference>
<dbReference type="GO" id="GO:0005737">
    <property type="term" value="C:cytoplasm"/>
    <property type="evidence" value="ECO:0007669"/>
    <property type="project" value="UniProtKB-SubCell"/>
</dbReference>
<dbReference type="GO" id="GO:0071424">
    <property type="term" value="F:rRNA (cytosine-N4-)-methyltransferase activity"/>
    <property type="evidence" value="ECO:0007669"/>
    <property type="project" value="UniProtKB-UniRule"/>
</dbReference>
<dbReference type="GO" id="GO:0070475">
    <property type="term" value="P:rRNA base methylation"/>
    <property type="evidence" value="ECO:0007669"/>
    <property type="project" value="UniProtKB-UniRule"/>
</dbReference>
<dbReference type="CDD" id="cd02440">
    <property type="entry name" value="AdoMet_MTases"/>
    <property type="match status" value="1"/>
</dbReference>
<dbReference type="FunFam" id="1.10.150.170:FF:000001">
    <property type="entry name" value="Ribosomal RNA small subunit methyltransferase H"/>
    <property type="match status" value="1"/>
</dbReference>
<dbReference type="Gene3D" id="1.10.150.170">
    <property type="entry name" value="Putative methyltransferase TM0872, insert domain"/>
    <property type="match status" value="1"/>
</dbReference>
<dbReference type="Gene3D" id="3.40.50.150">
    <property type="entry name" value="Vaccinia Virus protein VP39"/>
    <property type="match status" value="1"/>
</dbReference>
<dbReference type="HAMAP" id="MF_01007">
    <property type="entry name" value="16SrRNA_methyltr_H"/>
    <property type="match status" value="1"/>
</dbReference>
<dbReference type="InterPro" id="IPR002903">
    <property type="entry name" value="RsmH"/>
</dbReference>
<dbReference type="InterPro" id="IPR023397">
    <property type="entry name" value="SAM-dep_MeTrfase_MraW_recog"/>
</dbReference>
<dbReference type="InterPro" id="IPR029063">
    <property type="entry name" value="SAM-dependent_MTases_sf"/>
</dbReference>
<dbReference type="NCBIfam" id="TIGR00006">
    <property type="entry name" value="16S rRNA (cytosine(1402)-N(4))-methyltransferase RsmH"/>
    <property type="match status" value="1"/>
</dbReference>
<dbReference type="PANTHER" id="PTHR11265:SF0">
    <property type="entry name" value="12S RRNA N4-METHYLCYTIDINE METHYLTRANSFERASE"/>
    <property type="match status" value="1"/>
</dbReference>
<dbReference type="PANTHER" id="PTHR11265">
    <property type="entry name" value="S-ADENOSYL-METHYLTRANSFERASE MRAW"/>
    <property type="match status" value="1"/>
</dbReference>
<dbReference type="Pfam" id="PF01795">
    <property type="entry name" value="Methyltransf_5"/>
    <property type="match status" value="1"/>
</dbReference>
<dbReference type="PIRSF" id="PIRSF004486">
    <property type="entry name" value="MraW"/>
    <property type="match status" value="1"/>
</dbReference>
<dbReference type="SUPFAM" id="SSF81799">
    <property type="entry name" value="Putative methyltransferase TM0872, insert domain"/>
    <property type="match status" value="1"/>
</dbReference>
<dbReference type="SUPFAM" id="SSF53335">
    <property type="entry name" value="S-adenosyl-L-methionine-dependent methyltransferases"/>
    <property type="match status" value="1"/>
</dbReference>
<evidence type="ECO:0000255" key="1">
    <source>
        <dbReference type="HAMAP-Rule" id="MF_01007"/>
    </source>
</evidence>
<proteinExistence type="inferred from homology"/>
<feature type="chain" id="PRO_0000386689" description="Ribosomal RNA small subunit methyltransferase H">
    <location>
        <begin position="1"/>
        <end position="307"/>
    </location>
</feature>
<feature type="binding site" evidence="1">
    <location>
        <begin position="32"/>
        <end position="34"/>
    </location>
    <ligand>
        <name>S-adenosyl-L-methionine</name>
        <dbReference type="ChEBI" id="CHEBI:59789"/>
    </ligand>
</feature>
<feature type="binding site" evidence="1">
    <location>
        <position position="52"/>
    </location>
    <ligand>
        <name>S-adenosyl-L-methionine</name>
        <dbReference type="ChEBI" id="CHEBI:59789"/>
    </ligand>
</feature>
<feature type="binding site" evidence="1">
    <location>
        <position position="78"/>
    </location>
    <ligand>
        <name>S-adenosyl-L-methionine</name>
        <dbReference type="ChEBI" id="CHEBI:59789"/>
    </ligand>
</feature>
<feature type="binding site" evidence="1">
    <location>
        <position position="99"/>
    </location>
    <ligand>
        <name>S-adenosyl-L-methionine</name>
        <dbReference type="ChEBI" id="CHEBI:59789"/>
    </ligand>
</feature>
<feature type="binding site" evidence="1">
    <location>
        <position position="106"/>
    </location>
    <ligand>
        <name>S-adenosyl-L-methionine</name>
        <dbReference type="ChEBI" id="CHEBI:59789"/>
    </ligand>
</feature>
<protein>
    <recommendedName>
        <fullName evidence="1">Ribosomal RNA small subunit methyltransferase H</fullName>
        <ecNumber evidence="1">2.1.1.199</ecNumber>
    </recommendedName>
    <alternativeName>
        <fullName evidence="1">16S rRNA m(4)C1402 methyltransferase</fullName>
    </alternativeName>
    <alternativeName>
        <fullName evidence="1">rRNA (cytosine-N(4)-)-methyltransferase RsmH</fullName>
    </alternativeName>
</protein>
<name>RSMH_ACIB3</name>
<gene>
    <name evidence="1" type="primary">rsmH</name>
    <name type="synonym">mraW</name>
    <name type="ordered locus">ABBFA_000311</name>
</gene>
<comment type="function">
    <text evidence="1">Specifically methylates the N4 position of cytidine in position 1402 (C1402) of 16S rRNA.</text>
</comment>
<comment type="catalytic activity">
    <reaction evidence="1">
        <text>cytidine(1402) in 16S rRNA + S-adenosyl-L-methionine = N(4)-methylcytidine(1402) in 16S rRNA + S-adenosyl-L-homocysteine + H(+)</text>
        <dbReference type="Rhea" id="RHEA:42928"/>
        <dbReference type="Rhea" id="RHEA-COMP:10286"/>
        <dbReference type="Rhea" id="RHEA-COMP:10287"/>
        <dbReference type="ChEBI" id="CHEBI:15378"/>
        <dbReference type="ChEBI" id="CHEBI:57856"/>
        <dbReference type="ChEBI" id="CHEBI:59789"/>
        <dbReference type="ChEBI" id="CHEBI:74506"/>
        <dbReference type="ChEBI" id="CHEBI:82748"/>
        <dbReference type="EC" id="2.1.1.199"/>
    </reaction>
</comment>
<comment type="subcellular location">
    <subcellularLocation>
        <location evidence="1">Cytoplasm</location>
    </subcellularLocation>
</comment>
<comment type="similarity">
    <text evidence="1">Belongs to the methyltransferase superfamily. RsmH family.</text>
</comment>
<sequence length="307" mass="34670">MSHISVLLFETVESLLADRTTGVYIDATFGRGGHTRLLLSKLDENARVYAFDKDPQALEVAAALAQEDPRFTIIHASFADIKEKMQEIGVQSVDGIMADLGVSSPQLDQAERGFSFMQDGPLDMRMDNSKGLTAAEWLLEVEEEDLANIIYQYGEERYSRRIARAIKQAGKLDTTAQLAEIVKTAHPKWEKHKHPATRTFQAIRIAINKELDDIEVFLPQAVDLLKPKGRLSVISFHSLEDRLIKQFIQKESTLAEDSGWGMPQQQVDTRRLKKISRVRASEEEVKANPRSRSAWLRVAERLEQKGA</sequence>
<reference key="1">
    <citation type="journal article" date="2008" name="J. Bacteriol.">
        <title>Comparative genome sequence analysis of multidrug-resistant Acinetobacter baumannii.</title>
        <authorList>
            <person name="Adams M.D."/>
            <person name="Goglin K."/>
            <person name="Molyneaux N."/>
            <person name="Hujer K.M."/>
            <person name="Lavender H."/>
            <person name="Jamison J.J."/>
            <person name="MacDonald I.J."/>
            <person name="Martin K.M."/>
            <person name="Russo T."/>
            <person name="Campagnari A.A."/>
            <person name="Hujer A.M."/>
            <person name="Bonomo R.A."/>
            <person name="Gill S.R."/>
        </authorList>
    </citation>
    <scope>NUCLEOTIDE SEQUENCE [LARGE SCALE GENOMIC DNA]</scope>
    <source>
        <strain>AB307-0294</strain>
    </source>
</reference>
<accession>B7GVN1</accession>
<organism>
    <name type="scientific">Acinetobacter baumannii (strain AB307-0294)</name>
    <dbReference type="NCBI Taxonomy" id="557600"/>
    <lineage>
        <taxon>Bacteria</taxon>
        <taxon>Pseudomonadati</taxon>
        <taxon>Pseudomonadota</taxon>
        <taxon>Gammaproteobacteria</taxon>
        <taxon>Moraxellales</taxon>
        <taxon>Moraxellaceae</taxon>
        <taxon>Acinetobacter</taxon>
        <taxon>Acinetobacter calcoaceticus/baumannii complex</taxon>
    </lineage>
</organism>
<keyword id="KW-0963">Cytoplasm</keyword>
<keyword id="KW-0489">Methyltransferase</keyword>
<keyword id="KW-0698">rRNA processing</keyword>
<keyword id="KW-0949">S-adenosyl-L-methionine</keyword>
<keyword id="KW-0808">Transferase</keyword>